<name>TG124_CAEEL</name>
<gene>
    <name type="primary">tag-124</name>
    <name type="ORF">E02H1.3</name>
</gene>
<organism>
    <name type="scientific">Caenorhabditis elegans</name>
    <dbReference type="NCBI Taxonomy" id="6239"/>
    <lineage>
        <taxon>Eukaryota</taxon>
        <taxon>Metazoa</taxon>
        <taxon>Ecdysozoa</taxon>
        <taxon>Nematoda</taxon>
        <taxon>Chromadorea</taxon>
        <taxon>Rhabditida</taxon>
        <taxon>Rhabditina</taxon>
        <taxon>Rhabditomorpha</taxon>
        <taxon>Rhabditoidea</taxon>
        <taxon>Rhabditidae</taxon>
        <taxon>Peloderinae</taxon>
        <taxon>Caenorhabditis</taxon>
    </lineage>
</organism>
<evidence type="ECO:0000250" key="1"/>
<evidence type="ECO:0000256" key="2">
    <source>
        <dbReference type="SAM" id="MobiDB-lite"/>
    </source>
</evidence>
<evidence type="ECO:0000305" key="3"/>
<proteinExistence type="inferred from homology"/>
<comment type="function">
    <text evidence="1">Formation of pseudouridine at position 38 and 39 in the anticodon stem and loop of transfer RNAs.</text>
</comment>
<comment type="catalytic activity">
    <reaction>
        <text>a uridine in tRNA = a pseudouridine in tRNA</text>
        <dbReference type="Rhea" id="RHEA:54572"/>
        <dbReference type="Rhea" id="RHEA-COMP:13339"/>
        <dbReference type="Rhea" id="RHEA-COMP:13934"/>
        <dbReference type="ChEBI" id="CHEBI:65314"/>
        <dbReference type="ChEBI" id="CHEBI:65315"/>
    </reaction>
</comment>
<comment type="similarity">
    <text evidence="3">Belongs to the tRNA pseudouridine synthase TruA family.</text>
</comment>
<feature type="chain" id="PRO_0000057523" description="Probable tRNA pseudouridine synthase tag-124">
    <location>
        <begin position="1"/>
        <end position="402"/>
    </location>
</feature>
<feature type="region of interest" description="Disordered" evidence="2">
    <location>
        <begin position="383"/>
        <end position="402"/>
    </location>
</feature>
<feature type="active site" description="Nucleophile" evidence="1">
    <location>
        <position position="85"/>
    </location>
</feature>
<sequence>MGSKRVCPDANNSVKSKKAKTLDFLAHPRRKIAIQFFYLGWEHDGLVQQPHTQNTVENHIMQALIKTHLIEDWTKCDFSRCGRTDKGVSAFKQTAAMVVRSLCPGDSGVFWSDSTQEHQKVDYKASGEELPYVKMLNGVLPKTIRVFAWAPVAQTFNARFDCNRRTYKYSFAKADLNLEKMRQGAELLVGEHDFSNFCQIDMNEKRLLQSYVRKVYEVKVEQVSTHPENDMYSMVELTVSGSGFLWHMIRYIVTILQEIGRENEQPSLISQLLDLKKYPSRPQYTLASDTPLCLFDCGYKSEDVEWKVHDYTLKSTVTGLQKTWATYQARSRMMENMLGELTGMAEFSSGDANKGLHEFVQDRPIPSNYIRFENRKMCESLESKKEKMAEKKKNGEESSDKL</sequence>
<keyword id="KW-0413">Isomerase</keyword>
<keyword id="KW-1185">Reference proteome</keyword>
<keyword id="KW-0819">tRNA processing</keyword>
<protein>
    <recommendedName>
        <fullName>Probable tRNA pseudouridine synthase tag-124</fullName>
        <ecNumber>5.4.99.-</ecNumber>
    </recommendedName>
    <alternativeName>
        <fullName>tRNA pseudouridylate synthase</fullName>
    </alternativeName>
    <alternativeName>
        <fullName>tRNA-uridine isomerase</fullName>
    </alternativeName>
</protein>
<dbReference type="EC" id="5.4.99.-"/>
<dbReference type="EMBL" id="Z47075">
    <property type="protein sequence ID" value="CAA87378.1"/>
    <property type="molecule type" value="Genomic_DNA"/>
</dbReference>
<dbReference type="PIR" id="T20413">
    <property type="entry name" value="T20413"/>
</dbReference>
<dbReference type="RefSeq" id="NP_496062.3">
    <property type="nucleotide sequence ID" value="NM_063661.7"/>
</dbReference>
<dbReference type="SMR" id="Q09524"/>
<dbReference type="BioGRID" id="39832">
    <property type="interactions" value="1"/>
</dbReference>
<dbReference type="FunCoup" id="Q09524">
    <property type="interactions" value="2575"/>
</dbReference>
<dbReference type="STRING" id="6239.E02H1.3.1"/>
<dbReference type="PaxDb" id="6239-E02H1.3"/>
<dbReference type="PeptideAtlas" id="Q09524"/>
<dbReference type="EnsemblMetazoa" id="E02H1.3.1">
    <property type="protein sequence ID" value="E02H1.3.1"/>
    <property type="gene ID" value="WBGene00006473"/>
</dbReference>
<dbReference type="GeneID" id="174509"/>
<dbReference type="KEGG" id="cel:CELE_E02H1.3"/>
<dbReference type="UCSC" id="E02H1.3.1">
    <property type="organism name" value="c. elegans"/>
</dbReference>
<dbReference type="AGR" id="WB:WBGene00006473"/>
<dbReference type="CTD" id="174509"/>
<dbReference type="WormBase" id="E02H1.3">
    <property type="protein sequence ID" value="CE01538"/>
    <property type="gene ID" value="WBGene00006473"/>
    <property type="gene designation" value="tag-124"/>
</dbReference>
<dbReference type="eggNOG" id="KOG2554">
    <property type="taxonomic scope" value="Eukaryota"/>
</dbReference>
<dbReference type="GeneTree" id="ENSGT00950000183160"/>
<dbReference type="HOGENOM" id="CLU_014673_2_0_1"/>
<dbReference type="InParanoid" id="Q09524"/>
<dbReference type="OMA" id="YFGWEYN"/>
<dbReference type="OrthoDB" id="25767at2759"/>
<dbReference type="PhylomeDB" id="Q09524"/>
<dbReference type="PRO" id="PR:Q09524"/>
<dbReference type="Proteomes" id="UP000001940">
    <property type="component" value="Chromosome II"/>
</dbReference>
<dbReference type="Bgee" id="WBGene00006473">
    <property type="expression patterns" value="Expressed in germ line (C elegans) and 4 other cell types or tissues"/>
</dbReference>
<dbReference type="GO" id="GO:0005737">
    <property type="term" value="C:cytoplasm"/>
    <property type="evidence" value="ECO:0000318"/>
    <property type="project" value="GO_Central"/>
</dbReference>
<dbReference type="GO" id="GO:0005634">
    <property type="term" value="C:nucleus"/>
    <property type="evidence" value="ECO:0000318"/>
    <property type="project" value="GO_Central"/>
</dbReference>
<dbReference type="GO" id="GO:0009982">
    <property type="term" value="F:pseudouridine synthase activity"/>
    <property type="evidence" value="ECO:0000318"/>
    <property type="project" value="GO_Central"/>
</dbReference>
<dbReference type="GO" id="GO:0003723">
    <property type="term" value="F:RNA binding"/>
    <property type="evidence" value="ECO:0007669"/>
    <property type="project" value="InterPro"/>
</dbReference>
<dbReference type="GO" id="GO:0106029">
    <property type="term" value="F:tRNA pseudouridine synthase activity"/>
    <property type="evidence" value="ECO:0007669"/>
    <property type="project" value="RHEA"/>
</dbReference>
<dbReference type="GO" id="GO:1990481">
    <property type="term" value="P:mRNA pseudouridine synthesis"/>
    <property type="evidence" value="ECO:0000318"/>
    <property type="project" value="GO_Central"/>
</dbReference>
<dbReference type="GO" id="GO:0031119">
    <property type="term" value="P:tRNA pseudouridine synthesis"/>
    <property type="evidence" value="ECO:0000318"/>
    <property type="project" value="GO_Central"/>
</dbReference>
<dbReference type="CDD" id="cd02569">
    <property type="entry name" value="PseudoU_synth_ScPus3"/>
    <property type="match status" value="1"/>
</dbReference>
<dbReference type="FunFam" id="3.30.70.580:FF:000022">
    <property type="entry name" value="tRNA pseudouridine synthase"/>
    <property type="match status" value="1"/>
</dbReference>
<dbReference type="FunFam" id="3.30.70.660:FF:000043">
    <property type="entry name" value="tRNA pseudouridine synthase"/>
    <property type="match status" value="1"/>
</dbReference>
<dbReference type="Gene3D" id="3.30.70.660">
    <property type="entry name" value="Pseudouridine synthase I, catalytic domain, C-terminal subdomain"/>
    <property type="match status" value="1"/>
</dbReference>
<dbReference type="Gene3D" id="3.30.70.580">
    <property type="entry name" value="Pseudouridine synthase I, catalytic domain, N-terminal subdomain"/>
    <property type="match status" value="1"/>
</dbReference>
<dbReference type="HAMAP" id="MF_00171">
    <property type="entry name" value="TruA"/>
    <property type="match status" value="1"/>
</dbReference>
<dbReference type="InterPro" id="IPR020103">
    <property type="entry name" value="PsdUridine_synth_cat_dom_sf"/>
</dbReference>
<dbReference type="InterPro" id="IPR001406">
    <property type="entry name" value="PsdUridine_synth_TruA"/>
</dbReference>
<dbReference type="InterPro" id="IPR020097">
    <property type="entry name" value="PsdUridine_synth_TruA_a/b_dom"/>
</dbReference>
<dbReference type="InterPro" id="IPR020095">
    <property type="entry name" value="PsdUridine_synth_TruA_C"/>
</dbReference>
<dbReference type="InterPro" id="IPR041707">
    <property type="entry name" value="Pus3-like"/>
</dbReference>
<dbReference type="InterPro" id="IPR020094">
    <property type="entry name" value="TruA/RsuA/RluB/E/F_N"/>
</dbReference>
<dbReference type="NCBIfam" id="TIGR00071">
    <property type="entry name" value="hisT_truA"/>
    <property type="match status" value="1"/>
</dbReference>
<dbReference type="PANTHER" id="PTHR11142">
    <property type="entry name" value="PSEUDOURIDYLATE SYNTHASE"/>
    <property type="match status" value="1"/>
</dbReference>
<dbReference type="PANTHER" id="PTHR11142:SF5">
    <property type="entry name" value="TRNA PSEUDOURIDINE(38_39) SYNTHASE"/>
    <property type="match status" value="1"/>
</dbReference>
<dbReference type="Pfam" id="PF01416">
    <property type="entry name" value="PseudoU_synth_1"/>
    <property type="match status" value="1"/>
</dbReference>
<dbReference type="SUPFAM" id="SSF55120">
    <property type="entry name" value="Pseudouridine synthase"/>
    <property type="match status" value="1"/>
</dbReference>
<accession>Q09524</accession>
<reference key="1">
    <citation type="journal article" date="1998" name="Science">
        <title>Genome sequence of the nematode C. elegans: a platform for investigating biology.</title>
        <authorList>
            <consortium name="The C. elegans sequencing consortium"/>
        </authorList>
    </citation>
    <scope>NUCLEOTIDE SEQUENCE [LARGE SCALE GENOMIC DNA]</scope>
    <source>
        <strain>Bristol N2</strain>
    </source>
</reference>